<comment type="function">
    <text evidence="1">Located at the top of the head of the 30S subunit, it contacts several helices of the 16S rRNA. In the 70S ribosome it contacts the 23S rRNA (bridge B1a) and protein L5 of the 50S subunit (bridge B1b), connecting the 2 subunits; these bridges are implicated in subunit movement. Contacts the tRNAs in the A and P-sites.</text>
</comment>
<comment type="subunit">
    <text evidence="1">Part of the 30S ribosomal subunit. Forms a loose heterodimer with protein S19. Forms two bridges to the 50S subunit in the 70S ribosome.</text>
</comment>
<comment type="similarity">
    <text evidence="1">Belongs to the universal ribosomal protein uS13 family.</text>
</comment>
<sequence>MPRIIGIDIPAKKKLKISLTYIYGIGPALSEEIIARLQLNPEARAAELTEEEVGRLNALLQSDYVVEGDLRRRVQSDIKRLITIHAYRGQRHRLSLPVRGQRTKTNSRTRKGKRKTVAGKKK</sequence>
<reference key="1">
    <citation type="journal article" date="2000" name="Nucleic Acids Res.">
        <title>Genome sequences of Chlamydia trachomatis MoPn and Chlamydia pneumoniae AR39.</title>
        <authorList>
            <person name="Read T.D."/>
            <person name="Brunham R.C."/>
            <person name="Shen C."/>
            <person name="Gill S.R."/>
            <person name="Heidelberg J.F."/>
            <person name="White O."/>
            <person name="Hickey E.K."/>
            <person name="Peterson J.D."/>
            <person name="Utterback T.R."/>
            <person name="Berry K.J."/>
            <person name="Bass S."/>
            <person name="Linher K.D."/>
            <person name="Weidman J.F."/>
            <person name="Khouri H.M."/>
            <person name="Craven B."/>
            <person name="Bowman C."/>
            <person name="Dodson R.J."/>
            <person name="Gwinn M.L."/>
            <person name="Nelson W.C."/>
            <person name="DeBoy R.T."/>
            <person name="Kolonay J.F."/>
            <person name="McClarty G."/>
            <person name="Salzberg S.L."/>
            <person name="Eisen J.A."/>
            <person name="Fraser C.M."/>
        </authorList>
    </citation>
    <scope>NUCLEOTIDE SEQUENCE [LARGE SCALE GENOMIC DNA]</scope>
    <source>
        <strain>MoPn / Nigg</strain>
    </source>
</reference>
<accession>Q9PJN2</accession>
<proteinExistence type="inferred from homology"/>
<feature type="chain" id="PRO_0000132078" description="Small ribosomal subunit protein uS13">
    <location>
        <begin position="1"/>
        <end position="122"/>
    </location>
</feature>
<feature type="region of interest" description="Disordered" evidence="2">
    <location>
        <begin position="94"/>
        <end position="122"/>
    </location>
</feature>
<feature type="compositionally biased region" description="Basic residues" evidence="2">
    <location>
        <begin position="101"/>
        <end position="122"/>
    </location>
</feature>
<keyword id="KW-0687">Ribonucleoprotein</keyword>
<keyword id="KW-0689">Ribosomal protein</keyword>
<keyword id="KW-0694">RNA-binding</keyword>
<keyword id="KW-0699">rRNA-binding</keyword>
<keyword id="KW-0820">tRNA-binding</keyword>
<organism>
    <name type="scientific">Chlamydia muridarum (strain MoPn / Nigg)</name>
    <dbReference type="NCBI Taxonomy" id="243161"/>
    <lineage>
        <taxon>Bacteria</taxon>
        <taxon>Pseudomonadati</taxon>
        <taxon>Chlamydiota</taxon>
        <taxon>Chlamydiia</taxon>
        <taxon>Chlamydiales</taxon>
        <taxon>Chlamydiaceae</taxon>
        <taxon>Chlamydia/Chlamydophila group</taxon>
        <taxon>Chlamydia</taxon>
    </lineage>
</organism>
<gene>
    <name evidence="1" type="primary">rpsM</name>
    <name type="ordered locus">TC_0796</name>
</gene>
<dbReference type="EMBL" id="AE002160">
    <property type="protein sequence ID" value="AAF39599.1"/>
    <property type="molecule type" value="Genomic_DNA"/>
</dbReference>
<dbReference type="PIR" id="D81663">
    <property type="entry name" value="D81663"/>
</dbReference>
<dbReference type="RefSeq" id="WP_010231575.1">
    <property type="nucleotide sequence ID" value="NZ_CP063055.1"/>
</dbReference>
<dbReference type="SMR" id="Q9PJN2"/>
<dbReference type="GeneID" id="93065348"/>
<dbReference type="KEGG" id="cmu:TC_0796"/>
<dbReference type="eggNOG" id="COG0099">
    <property type="taxonomic scope" value="Bacteria"/>
</dbReference>
<dbReference type="HOGENOM" id="CLU_103849_1_2_0"/>
<dbReference type="OrthoDB" id="9803610at2"/>
<dbReference type="Proteomes" id="UP000000800">
    <property type="component" value="Chromosome"/>
</dbReference>
<dbReference type="GO" id="GO:0005829">
    <property type="term" value="C:cytosol"/>
    <property type="evidence" value="ECO:0007669"/>
    <property type="project" value="TreeGrafter"/>
</dbReference>
<dbReference type="GO" id="GO:0015935">
    <property type="term" value="C:small ribosomal subunit"/>
    <property type="evidence" value="ECO:0007669"/>
    <property type="project" value="TreeGrafter"/>
</dbReference>
<dbReference type="GO" id="GO:0019843">
    <property type="term" value="F:rRNA binding"/>
    <property type="evidence" value="ECO:0007669"/>
    <property type="project" value="UniProtKB-UniRule"/>
</dbReference>
<dbReference type="GO" id="GO:0003735">
    <property type="term" value="F:structural constituent of ribosome"/>
    <property type="evidence" value="ECO:0007669"/>
    <property type="project" value="InterPro"/>
</dbReference>
<dbReference type="GO" id="GO:0000049">
    <property type="term" value="F:tRNA binding"/>
    <property type="evidence" value="ECO:0007669"/>
    <property type="project" value="UniProtKB-UniRule"/>
</dbReference>
<dbReference type="GO" id="GO:0006412">
    <property type="term" value="P:translation"/>
    <property type="evidence" value="ECO:0007669"/>
    <property type="project" value="UniProtKB-UniRule"/>
</dbReference>
<dbReference type="FunFam" id="1.10.8.50:FF:000001">
    <property type="entry name" value="30S ribosomal protein S13"/>
    <property type="match status" value="1"/>
</dbReference>
<dbReference type="FunFam" id="4.10.910.10:FF:000001">
    <property type="entry name" value="30S ribosomal protein S13"/>
    <property type="match status" value="1"/>
</dbReference>
<dbReference type="Gene3D" id="1.10.8.50">
    <property type="match status" value="1"/>
</dbReference>
<dbReference type="Gene3D" id="4.10.910.10">
    <property type="entry name" value="30s ribosomal protein s13, domain 2"/>
    <property type="match status" value="1"/>
</dbReference>
<dbReference type="HAMAP" id="MF_01315">
    <property type="entry name" value="Ribosomal_uS13"/>
    <property type="match status" value="1"/>
</dbReference>
<dbReference type="InterPro" id="IPR027437">
    <property type="entry name" value="Rbsml_uS13_C"/>
</dbReference>
<dbReference type="InterPro" id="IPR001892">
    <property type="entry name" value="Ribosomal_uS13"/>
</dbReference>
<dbReference type="InterPro" id="IPR010979">
    <property type="entry name" value="Ribosomal_uS13-like_H2TH"/>
</dbReference>
<dbReference type="InterPro" id="IPR019980">
    <property type="entry name" value="Ribosomal_uS13_bac-type"/>
</dbReference>
<dbReference type="InterPro" id="IPR018269">
    <property type="entry name" value="Ribosomal_uS13_CS"/>
</dbReference>
<dbReference type="NCBIfam" id="TIGR03631">
    <property type="entry name" value="uS13_bact"/>
    <property type="match status" value="1"/>
</dbReference>
<dbReference type="PANTHER" id="PTHR10871">
    <property type="entry name" value="30S RIBOSOMAL PROTEIN S13/40S RIBOSOMAL PROTEIN S18"/>
    <property type="match status" value="1"/>
</dbReference>
<dbReference type="PANTHER" id="PTHR10871:SF1">
    <property type="entry name" value="SMALL RIBOSOMAL SUBUNIT PROTEIN US13M"/>
    <property type="match status" value="1"/>
</dbReference>
<dbReference type="Pfam" id="PF00416">
    <property type="entry name" value="Ribosomal_S13"/>
    <property type="match status" value="1"/>
</dbReference>
<dbReference type="PIRSF" id="PIRSF002134">
    <property type="entry name" value="Ribosomal_S13"/>
    <property type="match status" value="1"/>
</dbReference>
<dbReference type="SUPFAM" id="SSF46946">
    <property type="entry name" value="S13-like H2TH domain"/>
    <property type="match status" value="1"/>
</dbReference>
<dbReference type="PROSITE" id="PS00646">
    <property type="entry name" value="RIBOSOMAL_S13_1"/>
    <property type="match status" value="1"/>
</dbReference>
<dbReference type="PROSITE" id="PS50159">
    <property type="entry name" value="RIBOSOMAL_S13_2"/>
    <property type="match status" value="1"/>
</dbReference>
<protein>
    <recommendedName>
        <fullName evidence="1">Small ribosomal subunit protein uS13</fullName>
    </recommendedName>
    <alternativeName>
        <fullName evidence="3">30S ribosomal protein S13</fullName>
    </alternativeName>
</protein>
<name>RS13_CHLMU</name>
<evidence type="ECO:0000255" key="1">
    <source>
        <dbReference type="HAMAP-Rule" id="MF_01315"/>
    </source>
</evidence>
<evidence type="ECO:0000256" key="2">
    <source>
        <dbReference type="SAM" id="MobiDB-lite"/>
    </source>
</evidence>
<evidence type="ECO:0000305" key="3"/>